<reference key="1">
    <citation type="journal article" date="2004" name="Nat. Genet.">
        <title>Comparison of genome degradation in Paratyphi A and Typhi, human-restricted serovars of Salmonella enterica that cause typhoid.</title>
        <authorList>
            <person name="McClelland M."/>
            <person name="Sanderson K.E."/>
            <person name="Clifton S.W."/>
            <person name="Latreille P."/>
            <person name="Porwollik S."/>
            <person name="Sabo A."/>
            <person name="Meyer R."/>
            <person name="Bieri T."/>
            <person name="Ozersky P."/>
            <person name="McLellan M."/>
            <person name="Harkins C.R."/>
            <person name="Wang C."/>
            <person name="Nguyen C."/>
            <person name="Berghoff A."/>
            <person name="Elliott G."/>
            <person name="Kohlberg S."/>
            <person name="Strong C."/>
            <person name="Du F."/>
            <person name="Carter J."/>
            <person name="Kremizki C."/>
            <person name="Layman D."/>
            <person name="Leonard S."/>
            <person name="Sun H."/>
            <person name="Fulton L."/>
            <person name="Nash W."/>
            <person name="Miner T."/>
            <person name="Minx P."/>
            <person name="Delehaunty K."/>
            <person name="Fronick C."/>
            <person name="Magrini V."/>
            <person name="Nhan M."/>
            <person name="Warren W."/>
            <person name="Florea L."/>
            <person name="Spieth J."/>
            <person name="Wilson R.K."/>
        </authorList>
    </citation>
    <scope>NUCLEOTIDE SEQUENCE [LARGE SCALE GENOMIC DNA]</scope>
    <source>
        <strain>ATCC 9150 / SARB42</strain>
    </source>
</reference>
<dbReference type="EC" id="1.1.1.79" evidence="1"/>
<dbReference type="EC" id="1.1.1.81" evidence="1"/>
<dbReference type="EMBL" id="CP000026">
    <property type="protein sequence ID" value="AAV79304.1"/>
    <property type="molecule type" value="Genomic_DNA"/>
</dbReference>
<dbReference type="RefSeq" id="WP_000804679.1">
    <property type="nucleotide sequence ID" value="NC_006511.1"/>
</dbReference>
<dbReference type="SMR" id="Q5PLL9"/>
<dbReference type="KEGG" id="spt:SPA3498"/>
<dbReference type="HOGENOM" id="CLU_019796_1_2_6"/>
<dbReference type="Proteomes" id="UP000008185">
    <property type="component" value="Chromosome"/>
</dbReference>
<dbReference type="GO" id="GO:0005829">
    <property type="term" value="C:cytosol"/>
    <property type="evidence" value="ECO:0007669"/>
    <property type="project" value="TreeGrafter"/>
</dbReference>
<dbReference type="GO" id="GO:0005886">
    <property type="term" value="C:plasma membrane"/>
    <property type="evidence" value="ECO:0007669"/>
    <property type="project" value="UniProtKB-UniRule"/>
</dbReference>
<dbReference type="GO" id="GO:0030267">
    <property type="term" value="F:glyoxylate reductase (NADPH) activity"/>
    <property type="evidence" value="ECO:0007669"/>
    <property type="project" value="UniProtKB-UniRule"/>
</dbReference>
<dbReference type="GO" id="GO:0008465">
    <property type="term" value="F:hydroxypyruvate reductase (NADH) activity"/>
    <property type="evidence" value="ECO:0007669"/>
    <property type="project" value="RHEA"/>
</dbReference>
<dbReference type="GO" id="GO:0120509">
    <property type="term" value="F:hydroxypyruvate reductase (NADPH) activity"/>
    <property type="evidence" value="ECO:0007669"/>
    <property type="project" value="RHEA"/>
</dbReference>
<dbReference type="GO" id="GO:0051287">
    <property type="term" value="F:NAD binding"/>
    <property type="evidence" value="ECO:0007669"/>
    <property type="project" value="InterPro"/>
</dbReference>
<dbReference type="CDD" id="cd05301">
    <property type="entry name" value="GDH"/>
    <property type="match status" value="1"/>
</dbReference>
<dbReference type="FunFam" id="3.40.50.720:FF:000026">
    <property type="entry name" value="Glyoxylate/hydroxypyruvate reductase B"/>
    <property type="match status" value="1"/>
</dbReference>
<dbReference type="Gene3D" id="3.40.50.720">
    <property type="entry name" value="NAD(P)-binding Rossmann-like Domain"/>
    <property type="match status" value="2"/>
</dbReference>
<dbReference type="HAMAP" id="MF_01667">
    <property type="entry name" value="2_Hacid_dh_C_GhrB"/>
    <property type="match status" value="1"/>
</dbReference>
<dbReference type="InterPro" id="IPR050223">
    <property type="entry name" value="D-isomer_2-hydroxyacid_DH"/>
</dbReference>
<dbReference type="InterPro" id="IPR006139">
    <property type="entry name" value="D-isomer_2_OHA_DH_cat_dom"/>
</dbReference>
<dbReference type="InterPro" id="IPR029753">
    <property type="entry name" value="D-isomer_DH_CS"/>
</dbReference>
<dbReference type="InterPro" id="IPR006140">
    <property type="entry name" value="D-isomer_DH_NAD-bd"/>
</dbReference>
<dbReference type="InterPro" id="IPR023756">
    <property type="entry name" value="Glyo/OHPyrv_Rdtase_B"/>
</dbReference>
<dbReference type="InterPro" id="IPR036291">
    <property type="entry name" value="NAD(P)-bd_dom_sf"/>
</dbReference>
<dbReference type="NCBIfam" id="NF011938">
    <property type="entry name" value="PRK15409.1"/>
    <property type="match status" value="1"/>
</dbReference>
<dbReference type="PANTHER" id="PTHR10996">
    <property type="entry name" value="2-HYDROXYACID DEHYDROGENASE-RELATED"/>
    <property type="match status" value="1"/>
</dbReference>
<dbReference type="PANTHER" id="PTHR10996:SF283">
    <property type="entry name" value="GLYOXYLATE_HYDROXYPYRUVATE REDUCTASE B"/>
    <property type="match status" value="1"/>
</dbReference>
<dbReference type="Pfam" id="PF00389">
    <property type="entry name" value="2-Hacid_dh"/>
    <property type="match status" value="1"/>
</dbReference>
<dbReference type="Pfam" id="PF02826">
    <property type="entry name" value="2-Hacid_dh_C"/>
    <property type="match status" value="1"/>
</dbReference>
<dbReference type="SUPFAM" id="SSF52283">
    <property type="entry name" value="Formate/glycerate dehydrogenase catalytic domain-like"/>
    <property type="match status" value="1"/>
</dbReference>
<dbReference type="SUPFAM" id="SSF51735">
    <property type="entry name" value="NAD(P)-binding Rossmann-fold domains"/>
    <property type="match status" value="1"/>
</dbReference>
<dbReference type="PROSITE" id="PS00670">
    <property type="entry name" value="D_2_HYDROXYACID_DH_2"/>
    <property type="match status" value="1"/>
</dbReference>
<dbReference type="PROSITE" id="PS00671">
    <property type="entry name" value="D_2_HYDROXYACID_DH_3"/>
    <property type="match status" value="1"/>
</dbReference>
<organism>
    <name type="scientific">Salmonella paratyphi A (strain ATCC 9150 / SARB42)</name>
    <dbReference type="NCBI Taxonomy" id="295319"/>
    <lineage>
        <taxon>Bacteria</taxon>
        <taxon>Pseudomonadati</taxon>
        <taxon>Pseudomonadota</taxon>
        <taxon>Gammaproteobacteria</taxon>
        <taxon>Enterobacterales</taxon>
        <taxon>Enterobacteriaceae</taxon>
        <taxon>Salmonella</taxon>
    </lineage>
</organism>
<accession>Q5PLL9</accession>
<proteinExistence type="inferred from homology"/>
<gene>
    <name evidence="1" type="primary">ghrB</name>
    <name type="ordered locus">SPA3498</name>
</gene>
<protein>
    <recommendedName>
        <fullName evidence="1">Glyoxylate/hydroxypyruvate reductase B</fullName>
        <ecNumber evidence="1">1.1.1.79</ecNumber>
        <ecNumber evidence="1">1.1.1.81</ecNumber>
    </recommendedName>
</protein>
<feature type="chain" id="PRO_0000348394" description="Glyoxylate/hydroxypyruvate reductase B">
    <location>
        <begin position="1"/>
        <end position="324"/>
    </location>
</feature>
<feature type="active site" evidence="1">
    <location>
        <position position="237"/>
    </location>
</feature>
<feature type="active site" evidence="1">
    <location>
        <position position="266"/>
    </location>
</feature>
<feature type="active site" description="Proton donor" evidence="1">
    <location>
        <position position="285"/>
    </location>
</feature>
<evidence type="ECO:0000255" key="1">
    <source>
        <dbReference type="HAMAP-Rule" id="MF_01667"/>
    </source>
</evidence>
<comment type="function">
    <text evidence="1">Catalyzes the NADPH-dependent reduction of glyoxylate and hydroxypyruvate into glycolate and glycerate, respectively.</text>
</comment>
<comment type="catalytic activity">
    <reaction evidence="1">
        <text>glycolate + NADP(+) = glyoxylate + NADPH + H(+)</text>
        <dbReference type="Rhea" id="RHEA:10992"/>
        <dbReference type="ChEBI" id="CHEBI:15378"/>
        <dbReference type="ChEBI" id="CHEBI:29805"/>
        <dbReference type="ChEBI" id="CHEBI:36655"/>
        <dbReference type="ChEBI" id="CHEBI:57783"/>
        <dbReference type="ChEBI" id="CHEBI:58349"/>
        <dbReference type="EC" id="1.1.1.79"/>
    </reaction>
</comment>
<comment type="catalytic activity">
    <reaction evidence="1">
        <text>(R)-glycerate + NAD(+) = 3-hydroxypyruvate + NADH + H(+)</text>
        <dbReference type="Rhea" id="RHEA:17905"/>
        <dbReference type="ChEBI" id="CHEBI:15378"/>
        <dbReference type="ChEBI" id="CHEBI:16659"/>
        <dbReference type="ChEBI" id="CHEBI:17180"/>
        <dbReference type="ChEBI" id="CHEBI:57540"/>
        <dbReference type="ChEBI" id="CHEBI:57945"/>
        <dbReference type="EC" id="1.1.1.81"/>
    </reaction>
</comment>
<comment type="catalytic activity">
    <reaction evidence="1">
        <text>(R)-glycerate + NADP(+) = 3-hydroxypyruvate + NADPH + H(+)</text>
        <dbReference type="Rhea" id="RHEA:18657"/>
        <dbReference type="ChEBI" id="CHEBI:15378"/>
        <dbReference type="ChEBI" id="CHEBI:16659"/>
        <dbReference type="ChEBI" id="CHEBI:17180"/>
        <dbReference type="ChEBI" id="CHEBI:57783"/>
        <dbReference type="ChEBI" id="CHEBI:58349"/>
        <dbReference type="EC" id="1.1.1.81"/>
    </reaction>
</comment>
<comment type="subunit">
    <text evidence="1">Homodimer.</text>
</comment>
<comment type="subcellular location">
    <subcellularLocation>
        <location evidence="1">Cytoplasm</location>
    </subcellularLocation>
</comment>
<comment type="similarity">
    <text evidence="1">Belongs to the D-isomer specific 2-hydroxyacid dehydrogenase family. GhrB subfamily.</text>
</comment>
<keyword id="KW-0963">Cytoplasm</keyword>
<keyword id="KW-0520">NAD</keyword>
<keyword id="KW-0521">NADP</keyword>
<keyword id="KW-0560">Oxidoreductase</keyword>
<sequence>MKPSIILYKTLPDDLLHRLEAHFTVTQVPNLHPETVARHAQAFASAQGLLGASETVNRALLEKMPALRAASTISVGYDNVEVDALTARKIVLMHTPAVLTETVADTVMALMLATARRVVDVAERVKAGEWTESIGPAWFGVDVHHKTLGIVGMGRIGMALAQRAHFGFTMPVLYHARRRHQEAEDRFNARYCDLDTLLQEADFVCVILPLTTETRHLFGTTQFARMKSSAIFINAGRGPVVDENALIAALQNGEIYAAGLDVFEHEPLSVDSPLLNMSNVVAVPHIGSATHETRYNMMACAVDNLIDALQGKIEKNCVNPQAAG</sequence>
<name>GHRB_SALPA</name>